<accession>B5QZC1</accession>
<protein>
    <recommendedName>
        <fullName evidence="1">UPF0434 protein YcaR</fullName>
    </recommendedName>
</protein>
<reference key="1">
    <citation type="journal article" date="2008" name="Genome Res.">
        <title>Comparative genome analysis of Salmonella enteritidis PT4 and Salmonella gallinarum 287/91 provides insights into evolutionary and host adaptation pathways.</title>
        <authorList>
            <person name="Thomson N.R."/>
            <person name="Clayton D.J."/>
            <person name="Windhorst D."/>
            <person name="Vernikos G."/>
            <person name="Davidson S."/>
            <person name="Churcher C."/>
            <person name="Quail M.A."/>
            <person name="Stevens M."/>
            <person name="Jones M.A."/>
            <person name="Watson M."/>
            <person name="Barron A."/>
            <person name="Layton A."/>
            <person name="Pickard D."/>
            <person name="Kingsley R.A."/>
            <person name="Bignell A."/>
            <person name="Clark L."/>
            <person name="Harris B."/>
            <person name="Ormond D."/>
            <person name="Abdellah Z."/>
            <person name="Brooks K."/>
            <person name="Cherevach I."/>
            <person name="Chillingworth T."/>
            <person name="Woodward J."/>
            <person name="Norberczak H."/>
            <person name="Lord A."/>
            <person name="Arrowsmith C."/>
            <person name="Jagels K."/>
            <person name="Moule S."/>
            <person name="Mungall K."/>
            <person name="Saunders M."/>
            <person name="Whitehead S."/>
            <person name="Chabalgoity J.A."/>
            <person name="Maskell D."/>
            <person name="Humphreys T."/>
            <person name="Roberts M."/>
            <person name="Barrow P.A."/>
            <person name="Dougan G."/>
            <person name="Parkhill J."/>
        </authorList>
    </citation>
    <scope>NUCLEOTIDE SEQUENCE [LARGE SCALE GENOMIC DNA]</scope>
    <source>
        <strain>P125109</strain>
    </source>
</reference>
<dbReference type="EMBL" id="AM933172">
    <property type="protein sequence ID" value="CAR32474.1"/>
    <property type="molecule type" value="Genomic_DNA"/>
</dbReference>
<dbReference type="RefSeq" id="WP_000350061.1">
    <property type="nucleotide sequence ID" value="NC_011294.1"/>
</dbReference>
<dbReference type="SMR" id="B5QZC1"/>
<dbReference type="KEGG" id="set:SEN0891"/>
<dbReference type="HOGENOM" id="CLU_155659_3_1_6"/>
<dbReference type="Proteomes" id="UP000000613">
    <property type="component" value="Chromosome"/>
</dbReference>
<dbReference type="GO" id="GO:0005829">
    <property type="term" value="C:cytosol"/>
    <property type="evidence" value="ECO:0007669"/>
    <property type="project" value="TreeGrafter"/>
</dbReference>
<dbReference type="FunFam" id="2.20.25.10:FF:000002">
    <property type="entry name" value="UPF0434 protein YcaR"/>
    <property type="match status" value="1"/>
</dbReference>
<dbReference type="Gene3D" id="2.20.25.10">
    <property type="match status" value="1"/>
</dbReference>
<dbReference type="HAMAP" id="MF_01187">
    <property type="entry name" value="UPF0434"/>
    <property type="match status" value="1"/>
</dbReference>
<dbReference type="InterPro" id="IPR005651">
    <property type="entry name" value="Trm112-like"/>
</dbReference>
<dbReference type="NCBIfam" id="NF008806">
    <property type="entry name" value="PRK11827.1"/>
    <property type="match status" value="1"/>
</dbReference>
<dbReference type="PANTHER" id="PTHR33505:SF4">
    <property type="entry name" value="PROTEIN PREY, MITOCHONDRIAL"/>
    <property type="match status" value="1"/>
</dbReference>
<dbReference type="PANTHER" id="PTHR33505">
    <property type="entry name" value="ZGC:162634"/>
    <property type="match status" value="1"/>
</dbReference>
<dbReference type="Pfam" id="PF03966">
    <property type="entry name" value="Trm112p"/>
    <property type="match status" value="1"/>
</dbReference>
<dbReference type="SUPFAM" id="SSF158997">
    <property type="entry name" value="Trm112p-like"/>
    <property type="match status" value="1"/>
</dbReference>
<proteinExistence type="inferred from homology"/>
<evidence type="ECO:0000255" key="1">
    <source>
        <dbReference type="HAMAP-Rule" id="MF_01187"/>
    </source>
</evidence>
<organism>
    <name type="scientific">Salmonella enteritidis PT4 (strain P125109)</name>
    <dbReference type="NCBI Taxonomy" id="550537"/>
    <lineage>
        <taxon>Bacteria</taxon>
        <taxon>Pseudomonadati</taxon>
        <taxon>Pseudomonadota</taxon>
        <taxon>Gammaproteobacteria</taxon>
        <taxon>Enterobacterales</taxon>
        <taxon>Enterobacteriaceae</taxon>
        <taxon>Salmonella</taxon>
    </lineage>
</organism>
<name>YCAR_SALEP</name>
<comment type="similarity">
    <text evidence="1">Belongs to the UPF0434 family.</text>
</comment>
<feature type="chain" id="PRO_1000138329" description="UPF0434 protein YcaR">
    <location>
        <begin position="1"/>
        <end position="60"/>
    </location>
</feature>
<gene>
    <name evidence="1" type="primary">ycaR</name>
    <name type="ordered locus">SEN0891</name>
</gene>
<sequence>MDHRLLEIIACPVCNGKLWYNQEQQELICKLDNLAFPLRDGIPVLLENEARALTSDESKS</sequence>